<accession>A0AEI6</accession>
<sequence>MFTMKKSLLLLFFLGMISLSLCEQERGADEDEGEVEEQIKRSIWEGIKNAGKGFLVSILDKVRCKVAGGCNP</sequence>
<feature type="signal peptide" evidence="1">
    <location>
        <begin position="1"/>
        <end position="22"/>
    </location>
</feature>
<feature type="propeptide" id="PRO_0000271187" evidence="1 2">
    <location>
        <begin position="23"/>
        <end position="42"/>
    </location>
</feature>
<feature type="peptide" id="PRO_5000147966" description="Brevinin-2GHc" evidence="2">
    <location>
        <begin position="43"/>
        <end position="72"/>
    </location>
</feature>
<feature type="disulfide bond" evidence="2">
    <location>
        <begin position="64"/>
        <end position="70"/>
    </location>
</feature>
<name>BR2C_SYLGU</name>
<keyword id="KW-0878">Amphibian defense peptide</keyword>
<keyword id="KW-0044">Antibiotic</keyword>
<keyword id="KW-0929">Antimicrobial</keyword>
<keyword id="KW-0903">Direct protein sequencing</keyword>
<keyword id="KW-1015">Disulfide bond</keyword>
<keyword id="KW-0964">Secreted</keyword>
<keyword id="KW-0732">Signal</keyword>
<dbReference type="EMBL" id="AM262990">
    <property type="protein sequence ID" value="CAK18910.1"/>
    <property type="molecule type" value="mRNA"/>
</dbReference>
<dbReference type="SMR" id="A0AEI6"/>
<dbReference type="GO" id="GO:0005576">
    <property type="term" value="C:extracellular region"/>
    <property type="evidence" value="ECO:0007669"/>
    <property type="project" value="UniProtKB-SubCell"/>
</dbReference>
<dbReference type="GO" id="GO:0042742">
    <property type="term" value="P:defense response to bacterium"/>
    <property type="evidence" value="ECO:0007669"/>
    <property type="project" value="UniProtKB-KW"/>
</dbReference>
<dbReference type="GO" id="GO:0044179">
    <property type="term" value="P:hemolysis in another organism"/>
    <property type="evidence" value="ECO:0007669"/>
    <property type="project" value="UniProtKB-ARBA"/>
</dbReference>
<dbReference type="InterPro" id="IPR012521">
    <property type="entry name" value="Antimicrobial_frog_2"/>
</dbReference>
<dbReference type="InterPro" id="IPR004275">
    <property type="entry name" value="Frog_antimicrobial_propeptide"/>
</dbReference>
<dbReference type="Pfam" id="PF08023">
    <property type="entry name" value="Antimicrobial_2"/>
    <property type="match status" value="1"/>
</dbReference>
<dbReference type="Pfam" id="PF03032">
    <property type="entry name" value="FSAP_sig_propep"/>
    <property type="match status" value="1"/>
</dbReference>
<protein>
    <recommendedName>
        <fullName>Brevinin-2GHc</fullName>
    </recommendedName>
    <alternativeName>
        <fullName>AMP-4</fullName>
    </alternativeName>
</protein>
<reference evidence="3 4" key="1">
    <citation type="journal article" date="2006" name="Peptides">
        <title>Purification and characterization of novel antimicrobial peptides from the skin secretion of Hylarana guentheri.</title>
        <authorList>
            <person name="Zhou J."/>
            <person name="McClean S."/>
            <person name="Thompson A."/>
            <person name="Zhang Y."/>
            <person name="Shaw C."/>
            <person name="Rao P."/>
            <person name="Bjourson A.J."/>
        </authorList>
    </citation>
    <scope>NUCLEOTIDE SEQUENCE [MRNA]</scope>
    <scope>PROTEIN SEQUENCE OF 42-72</scope>
    <scope>FUNCTION</scope>
    <scope>SUBCELLULAR LOCATION</scope>
    <scope>TISSUE SPECIFICITY</scope>
    <scope>DISULFIDE BOND</scope>
    <scope>MASS SPECTROMETRY</scope>
    <source>
        <tissue evidence="2">Skin</tissue>
        <tissue evidence="2">Skin secretion</tissue>
    </source>
</reference>
<gene>
    <name evidence="4" type="primary">br2GHc</name>
</gene>
<proteinExistence type="evidence at protein level"/>
<evidence type="ECO:0000255" key="1"/>
<evidence type="ECO:0000269" key="2">
    <source>
    </source>
</evidence>
<evidence type="ECO:0000305" key="3"/>
<evidence type="ECO:0000312" key="4">
    <source>
        <dbReference type="EMBL" id="CAK18910.1"/>
    </source>
</evidence>
<organism>
    <name type="scientific">Sylvirana guentheri</name>
    <name type="common">Gunther's frog</name>
    <name type="synonym">Rana guentheri</name>
    <dbReference type="NCBI Taxonomy" id="110109"/>
    <lineage>
        <taxon>Eukaryota</taxon>
        <taxon>Metazoa</taxon>
        <taxon>Chordata</taxon>
        <taxon>Craniata</taxon>
        <taxon>Vertebrata</taxon>
        <taxon>Euteleostomi</taxon>
        <taxon>Amphibia</taxon>
        <taxon>Batrachia</taxon>
        <taxon>Anura</taxon>
        <taxon>Neobatrachia</taxon>
        <taxon>Ranoidea</taxon>
        <taxon>Ranidae</taxon>
        <taxon>Sylvirana</taxon>
    </lineage>
</organism>
<comment type="function">
    <text evidence="2">Antimicrobial peptide. Active against the Gram-positive bacteria S.aureus FDA209P (MIC=9.8 ug/ml) and B.subtilis ATCC 6633 (MIC&gt;64 ug/ml), and the Gram-negative bacteria E.coli O111 (MIC=19.6 ug/ml) and E.coli ATCC 25922 (MIC=9.8 ug/ml). Not active against the fungus C.albicans.</text>
</comment>
<comment type="subcellular location">
    <subcellularLocation>
        <location evidence="2">Secreted</location>
    </subcellularLocation>
</comment>
<comment type="tissue specificity">
    <text evidence="2">Expressed by the skin glands.</text>
</comment>
<comment type="mass spectrometry"/>
<comment type="similarity">
    <text evidence="1">Belongs to the frog skin active peptide (FSAP) family. Brevinin subfamily.</text>
</comment>